<dbReference type="EMBL" id="AK074313">
    <property type="protein sequence ID" value="BAB85047.1"/>
    <property type="molecule type" value="mRNA"/>
</dbReference>
<dbReference type="EMBL" id="BC000978">
    <property type="protein sequence ID" value="AAH00978.2"/>
    <property type="molecule type" value="mRNA"/>
</dbReference>
<dbReference type="EMBL" id="BC098375">
    <property type="protein sequence ID" value="AAH98375.1"/>
    <property type="molecule type" value="mRNA"/>
</dbReference>
<dbReference type="EMBL" id="BC110855">
    <property type="protein sequence ID" value="AAI10856.1"/>
    <property type="molecule type" value="mRNA"/>
</dbReference>
<dbReference type="CCDS" id="CCDS2787.1"/>
<dbReference type="RefSeq" id="NP_001307509.1">
    <property type="nucleotide sequence ID" value="NM_001320580.2"/>
</dbReference>
<dbReference type="RefSeq" id="NP_001307510.1">
    <property type="nucleotide sequence ID" value="NM_001320581.2"/>
</dbReference>
<dbReference type="RefSeq" id="NP_001307511.1">
    <property type="nucleotide sequence ID" value="NM_001320582.2"/>
</dbReference>
<dbReference type="RefSeq" id="NP_001307512.1">
    <property type="nucleotide sequence ID" value="NM_001320583.2"/>
</dbReference>
<dbReference type="RefSeq" id="NP_001307513.1">
    <property type="nucleotide sequence ID" value="NM_001320584.1"/>
</dbReference>
<dbReference type="RefSeq" id="NP_001307514.1">
    <property type="nucleotide sequence ID" value="NM_001320585.1"/>
</dbReference>
<dbReference type="RefSeq" id="NP_060200.2">
    <property type="nucleotide sequence ID" value="NM_017730.3"/>
</dbReference>
<dbReference type="RefSeq" id="NP_942581.1">
    <property type="nucleotide sequence ID" value="NM_198880.3"/>
</dbReference>
<dbReference type="RefSeq" id="XP_011532165.1">
    <property type="nucleotide sequence ID" value="XM_011533863.1"/>
</dbReference>
<dbReference type="RefSeq" id="XP_047304355.1">
    <property type="nucleotide sequence ID" value="XM_047448399.1"/>
</dbReference>
<dbReference type="RefSeq" id="XP_054202979.1">
    <property type="nucleotide sequence ID" value="XM_054347004.1"/>
</dbReference>
<dbReference type="RefSeq" id="XP_054202980.1">
    <property type="nucleotide sequence ID" value="XM_054347005.1"/>
</dbReference>
<dbReference type="SMR" id="Q2TAL8"/>
<dbReference type="BioGRID" id="120219">
    <property type="interactions" value="165"/>
</dbReference>
<dbReference type="FunCoup" id="Q2TAL8">
    <property type="interactions" value="4205"/>
</dbReference>
<dbReference type="IntAct" id="Q2TAL8">
    <property type="interactions" value="104"/>
</dbReference>
<dbReference type="MINT" id="Q2TAL8"/>
<dbReference type="STRING" id="9606.ENSP00000378830"/>
<dbReference type="GlyCosmos" id="Q2TAL8">
    <property type="glycosylation" value="4 sites, 2 glycans"/>
</dbReference>
<dbReference type="GlyGen" id="Q2TAL8">
    <property type="glycosylation" value="6 sites, 2 O-linked glycans (6 sites)"/>
</dbReference>
<dbReference type="iPTMnet" id="Q2TAL8"/>
<dbReference type="MetOSite" id="Q2TAL8"/>
<dbReference type="PhosphoSitePlus" id="Q2TAL8"/>
<dbReference type="BioMuta" id="QRICH1"/>
<dbReference type="DMDM" id="121941773"/>
<dbReference type="jPOST" id="Q2TAL8"/>
<dbReference type="MassIVE" id="Q2TAL8"/>
<dbReference type="PaxDb" id="9606-ENSP00000378830"/>
<dbReference type="PeptideAtlas" id="Q2TAL8"/>
<dbReference type="ProteomicsDB" id="61468"/>
<dbReference type="Pumba" id="Q2TAL8"/>
<dbReference type="Antibodypedia" id="30380">
    <property type="antibodies" value="27 antibodies from 10 providers"/>
</dbReference>
<dbReference type="DNASU" id="54870"/>
<dbReference type="Ensembl" id="ENST00000357496.6">
    <property type="protein sequence ID" value="ENSP00000350094.2"/>
    <property type="gene ID" value="ENSG00000198218.12"/>
</dbReference>
<dbReference type="Ensembl" id="ENST00000395443.7">
    <property type="protein sequence ID" value="ENSP00000378830.2"/>
    <property type="gene ID" value="ENSG00000198218.12"/>
</dbReference>
<dbReference type="Ensembl" id="ENST00000411682.2">
    <property type="protein sequence ID" value="ENSP00000412870.2"/>
    <property type="gene ID" value="ENSG00000198218.12"/>
</dbReference>
<dbReference type="Ensembl" id="ENST00000424300.5">
    <property type="protein sequence ID" value="ENSP00000412890.1"/>
    <property type="gene ID" value="ENSG00000198218.12"/>
</dbReference>
<dbReference type="Ensembl" id="ENST00000703871.1">
    <property type="protein sequence ID" value="ENSP00000515516.1"/>
    <property type="gene ID" value="ENSG00000198218.12"/>
</dbReference>
<dbReference type="Ensembl" id="ENST00000703942.1">
    <property type="protein sequence ID" value="ENSP00000515573.1"/>
    <property type="gene ID" value="ENSG00000198218.12"/>
</dbReference>
<dbReference type="GeneID" id="54870"/>
<dbReference type="KEGG" id="hsa:54870"/>
<dbReference type="MANE-Select" id="ENST00000395443.7">
    <property type="protein sequence ID" value="ENSP00000378830.2"/>
    <property type="RefSeq nucleotide sequence ID" value="NM_198880.3"/>
    <property type="RefSeq protein sequence ID" value="NP_942581.1"/>
</dbReference>
<dbReference type="UCSC" id="uc003cvu.4">
    <property type="organism name" value="human"/>
</dbReference>
<dbReference type="AGR" id="HGNC:24713"/>
<dbReference type="CTD" id="54870"/>
<dbReference type="DisGeNET" id="54870"/>
<dbReference type="GeneCards" id="QRICH1"/>
<dbReference type="HGNC" id="HGNC:24713">
    <property type="gene designation" value="QRICH1"/>
</dbReference>
<dbReference type="HPA" id="ENSG00000198218">
    <property type="expression patterns" value="Low tissue specificity"/>
</dbReference>
<dbReference type="MalaCards" id="QRICH1"/>
<dbReference type="MIM" id="617387">
    <property type="type" value="gene"/>
</dbReference>
<dbReference type="MIM" id="617982">
    <property type="type" value="phenotype"/>
</dbReference>
<dbReference type="neXtProt" id="NX_Q2TAL8"/>
<dbReference type="OpenTargets" id="ENSG00000198218"/>
<dbReference type="Orphanet" id="580940">
    <property type="disease" value="QRICH1-related intellectual disability-chondrodysplasia syndrome"/>
</dbReference>
<dbReference type="PharmGKB" id="PA142671106"/>
<dbReference type="VEuPathDB" id="HostDB:ENSG00000198218"/>
<dbReference type="eggNOG" id="ENOG502QU8W">
    <property type="taxonomic scope" value="Eukaryota"/>
</dbReference>
<dbReference type="GeneTree" id="ENSGT00940000155241"/>
<dbReference type="HOGENOM" id="CLU_025446_0_0_1"/>
<dbReference type="InParanoid" id="Q2TAL8"/>
<dbReference type="OMA" id="QVQIHEA"/>
<dbReference type="OrthoDB" id="10025028at2759"/>
<dbReference type="PAN-GO" id="Q2TAL8">
    <property type="GO annotations" value="0 GO annotations based on evolutionary models"/>
</dbReference>
<dbReference type="PhylomeDB" id="Q2TAL8"/>
<dbReference type="TreeFam" id="TF336988"/>
<dbReference type="PathwayCommons" id="Q2TAL8"/>
<dbReference type="SignaLink" id="Q2TAL8"/>
<dbReference type="SIGNOR" id="Q2TAL8"/>
<dbReference type="BioGRID-ORCS" id="54870">
    <property type="hits" value="139 hits in 1162 CRISPR screens"/>
</dbReference>
<dbReference type="ChiTaRS" id="QRICH1">
    <property type="organism name" value="human"/>
</dbReference>
<dbReference type="GeneWiki" id="QRICH1"/>
<dbReference type="GenomeRNAi" id="54870"/>
<dbReference type="Pharos" id="Q2TAL8">
    <property type="development level" value="Tdark"/>
</dbReference>
<dbReference type="PRO" id="PR:Q2TAL8"/>
<dbReference type="Proteomes" id="UP000005640">
    <property type="component" value="Chromosome 3"/>
</dbReference>
<dbReference type="RNAct" id="Q2TAL8">
    <property type="molecule type" value="protein"/>
</dbReference>
<dbReference type="Bgee" id="ENSG00000198218">
    <property type="expression patterns" value="Expressed in granulocyte and 211 other cell types or tissues"/>
</dbReference>
<dbReference type="ExpressionAtlas" id="Q2TAL8">
    <property type="expression patterns" value="baseline and differential"/>
</dbReference>
<dbReference type="GO" id="GO:0005737">
    <property type="term" value="C:cytoplasm"/>
    <property type="evidence" value="ECO:0007669"/>
    <property type="project" value="UniProtKB-SubCell"/>
</dbReference>
<dbReference type="GO" id="GO:0005634">
    <property type="term" value="C:nucleus"/>
    <property type="evidence" value="ECO:0000314"/>
    <property type="project" value="UniProtKB"/>
</dbReference>
<dbReference type="GO" id="GO:0005886">
    <property type="term" value="C:plasma membrane"/>
    <property type="evidence" value="ECO:0007669"/>
    <property type="project" value="UniProtKB-SubCell"/>
</dbReference>
<dbReference type="GO" id="GO:0003677">
    <property type="term" value="F:DNA binding"/>
    <property type="evidence" value="ECO:0000315"/>
    <property type="project" value="UniProtKB"/>
</dbReference>
<dbReference type="GO" id="GO:0030968">
    <property type="term" value="P:endoplasmic reticulum unfolded protein response"/>
    <property type="evidence" value="ECO:0000315"/>
    <property type="project" value="UniProtKB"/>
</dbReference>
<dbReference type="GO" id="GO:0140467">
    <property type="term" value="P:integrated stress response signaling"/>
    <property type="evidence" value="ECO:0000315"/>
    <property type="project" value="UniProtKB"/>
</dbReference>
<dbReference type="GO" id="GO:0070059">
    <property type="term" value="P:intrinsic apoptotic signaling pathway in response to endoplasmic reticulum stress"/>
    <property type="evidence" value="ECO:0000315"/>
    <property type="project" value="UniProtKB"/>
</dbReference>
<dbReference type="GO" id="GO:0036499">
    <property type="term" value="P:PERK-mediated unfolded protein response"/>
    <property type="evidence" value="ECO:0000315"/>
    <property type="project" value="UniProtKB"/>
</dbReference>
<dbReference type="GO" id="GO:0043065">
    <property type="term" value="P:positive regulation of apoptotic process"/>
    <property type="evidence" value="ECO:0000315"/>
    <property type="project" value="UniProtKB"/>
</dbReference>
<dbReference type="GO" id="GO:0045893">
    <property type="term" value="P:positive regulation of DNA-templated transcription"/>
    <property type="evidence" value="ECO:0000315"/>
    <property type="project" value="UniProtKB"/>
</dbReference>
<dbReference type="GO" id="GO:0034976">
    <property type="term" value="P:response to endoplasmic reticulum stress"/>
    <property type="evidence" value="ECO:0000315"/>
    <property type="project" value="UniProtKB"/>
</dbReference>
<dbReference type="CDD" id="cd01671">
    <property type="entry name" value="CARD"/>
    <property type="match status" value="1"/>
</dbReference>
<dbReference type="InterPro" id="IPR021893">
    <property type="entry name" value="DUF3504"/>
</dbReference>
<dbReference type="InterPro" id="IPR051284">
    <property type="entry name" value="ZnF_MYMT-QRICH1"/>
</dbReference>
<dbReference type="PANTHER" id="PTHR45736:SF8">
    <property type="entry name" value="TRANSCRIPTIONAL REGULATOR QRICH1"/>
    <property type="match status" value="1"/>
</dbReference>
<dbReference type="PANTHER" id="PTHR45736">
    <property type="entry name" value="ZINC FINGER MYM-TYPE PROTEIN"/>
    <property type="match status" value="1"/>
</dbReference>
<dbReference type="Pfam" id="PF12012">
    <property type="entry name" value="DUF3504"/>
    <property type="match status" value="1"/>
</dbReference>
<accession>Q2TAL8</accession>
<accession>Q4G0F7</accession>
<accession>Q7L621</accession>
<accession>Q8TEA5</accession>
<gene>
    <name evidence="9" type="primary">QRICH1</name>
</gene>
<reference key="1">
    <citation type="journal article" date="2004" name="Nat. Genet.">
        <title>Complete sequencing and characterization of 21,243 full-length human cDNAs.</title>
        <authorList>
            <person name="Ota T."/>
            <person name="Suzuki Y."/>
            <person name="Nishikawa T."/>
            <person name="Otsuki T."/>
            <person name="Sugiyama T."/>
            <person name="Irie R."/>
            <person name="Wakamatsu A."/>
            <person name="Hayashi K."/>
            <person name="Sato H."/>
            <person name="Nagai K."/>
            <person name="Kimura K."/>
            <person name="Makita H."/>
            <person name="Sekine M."/>
            <person name="Obayashi M."/>
            <person name="Nishi T."/>
            <person name="Shibahara T."/>
            <person name="Tanaka T."/>
            <person name="Ishii S."/>
            <person name="Yamamoto J."/>
            <person name="Saito K."/>
            <person name="Kawai Y."/>
            <person name="Isono Y."/>
            <person name="Nakamura Y."/>
            <person name="Nagahari K."/>
            <person name="Murakami K."/>
            <person name="Yasuda T."/>
            <person name="Iwayanagi T."/>
            <person name="Wagatsuma M."/>
            <person name="Shiratori A."/>
            <person name="Sudo H."/>
            <person name="Hosoiri T."/>
            <person name="Kaku Y."/>
            <person name="Kodaira H."/>
            <person name="Kondo H."/>
            <person name="Sugawara M."/>
            <person name="Takahashi M."/>
            <person name="Kanda K."/>
            <person name="Yokoi T."/>
            <person name="Furuya T."/>
            <person name="Kikkawa E."/>
            <person name="Omura Y."/>
            <person name="Abe K."/>
            <person name="Kamihara K."/>
            <person name="Katsuta N."/>
            <person name="Sato K."/>
            <person name="Tanikawa M."/>
            <person name="Yamazaki M."/>
            <person name="Ninomiya K."/>
            <person name="Ishibashi T."/>
            <person name="Yamashita H."/>
            <person name="Murakawa K."/>
            <person name="Fujimori K."/>
            <person name="Tanai H."/>
            <person name="Kimata M."/>
            <person name="Watanabe M."/>
            <person name="Hiraoka S."/>
            <person name="Chiba Y."/>
            <person name="Ishida S."/>
            <person name="Ono Y."/>
            <person name="Takiguchi S."/>
            <person name="Watanabe S."/>
            <person name="Yosida M."/>
            <person name="Hotuta T."/>
            <person name="Kusano J."/>
            <person name="Kanehori K."/>
            <person name="Takahashi-Fujii A."/>
            <person name="Hara H."/>
            <person name="Tanase T.-O."/>
            <person name="Nomura Y."/>
            <person name="Togiya S."/>
            <person name="Komai F."/>
            <person name="Hara R."/>
            <person name="Takeuchi K."/>
            <person name="Arita M."/>
            <person name="Imose N."/>
            <person name="Musashino K."/>
            <person name="Yuuki H."/>
            <person name="Oshima A."/>
            <person name="Sasaki N."/>
            <person name="Aotsuka S."/>
            <person name="Yoshikawa Y."/>
            <person name="Matsunawa H."/>
            <person name="Ichihara T."/>
            <person name="Shiohata N."/>
            <person name="Sano S."/>
            <person name="Moriya S."/>
            <person name="Momiyama H."/>
            <person name="Satoh N."/>
            <person name="Takami S."/>
            <person name="Terashima Y."/>
            <person name="Suzuki O."/>
            <person name="Nakagawa S."/>
            <person name="Senoh A."/>
            <person name="Mizoguchi H."/>
            <person name="Goto Y."/>
            <person name="Shimizu F."/>
            <person name="Wakebe H."/>
            <person name="Hishigaki H."/>
            <person name="Watanabe T."/>
            <person name="Sugiyama A."/>
            <person name="Takemoto M."/>
            <person name="Kawakami B."/>
            <person name="Yamazaki M."/>
            <person name="Watanabe K."/>
            <person name="Kumagai A."/>
            <person name="Itakura S."/>
            <person name="Fukuzumi Y."/>
            <person name="Fujimori Y."/>
            <person name="Komiyama M."/>
            <person name="Tashiro H."/>
            <person name="Tanigami A."/>
            <person name="Fujiwara T."/>
            <person name="Ono T."/>
            <person name="Yamada K."/>
            <person name="Fujii Y."/>
            <person name="Ozaki K."/>
            <person name="Hirao M."/>
            <person name="Ohmori Y."/>
            <person name="Kawabata A."/>
            <person name="Hikiji T."/>
            <person name="Kobatake N."/>
            <person name="Inagaki H."/>
            <person name="Ikema Y."/>
            <person name="Okamoto S."/>
            <person name="Okitani R."/>
            <person name="Kawakami T."/>
            <person name="Noguchi S."/>
            <person name="Itoh T."/>
            <person name="Shigeta K."/>
            <person name="Senba T."/>
            <person name="Matsumura K."/>
            <person name="Nakajima Y."/>
            <person name="Mizuno T."/>
            <person name="Morinaga M."/>
            <person name="Sasaki M."/>
            <person name="Togashi T."/>
            <person name="Oyama M."/>
            <person name="Hata H."/>
            <person name="Watanabe M."/>
            <person name="Komatsu T."/>
            <person name="Mizushima-Sugano J."/>
            <person name="Satoh T."/>
            <person name="Shirai Y."/>
            <person name="Takahashi Y."/>
            <person name="Nakagawa K."/>
            <person name="Okumura K."/>
            <person name="Nagase T."/>
            <person name="Nomura N."/>
            <person name="Kikuchi H."/>
            <person name="Masuho Y."/>
            <person name="Yamashita R."/>
            <person name="Nakai K."/>
            <person name="Yada T."/>
            <person name="Nakamura Y."/>
            <person name="Ohara O."/>
            <person name="Isogai T."/>
            <person name="Sugano S."/>
        </authorList>
    </citation>
    <scope>NUCLEOTIDE SEQUENCE [LARGE SCALE MRNA]</scope>
</reference>
<reference key="2">
    <citation type="journal article" date="2004" name="Genome Res.">
        <title>The status, quality, and expansion of the NIH full-length cDNA project: the Mammalian Gene Collection (MGC).</title>
        <authorList>
            <consortium name="The MGC Project Team"/>
        </authorList>
    </citation>
    <scope>NUCLEOTIDE SEQUENCE [LARGE SCALE MRNA]</scope>
    <source>
        <tissue>Placenta</tissue>
        <tissue>Skin</tissue>
        <tissue>Uterus</tissue>
    </source>
</reference>
<reference key="3">
    <citation type="journal article" date="2008" name="Proc. Natl. Acad. Sci. U.S.A.">
        <title>A quantitative atlas of mitotic phosphorylation.</title>
        <authorList>
            <person name="Dephoure N."/>
            <person name="Zhou C."/>
            <person name="Villen J."/>
            <person name="Beausoleil S.A."/>
            <person name="Bakalarski C.E."/>
            <person name="Elledge S.J."/>
            <person name="Gygi S.P."/>
        </authorList>
    </citation>
    <scope>IDENTIFICATION BY MASS SPECTROMETRY [LARGE SCALE ANALYSIS]</scope>
    <source>
        <tissue>Cervix carcinoma</tissue>
    </source>
</reference>
<reference key="4">
    <citation type="journal article" date="2009" name="Sci. Signal.">
        <title>Quantitative phosphoproteomic analysis of T cell receptor signaling reveals system-wide modulation of protein-protein interactions.</title>
        <authorList>
            <person name="Mayya V."/>
            <person name="Lundgren D.H."/>
            <person name="Hwang S.-I."/>
            <person name="Rezaul K."/>
            <person name="Wu L."/>
            <person name="Eng J.K."/>
            <person name="Rodionov V."/>
            <person name="Han D.K."/>
        </authorList>
    </citation>
    <scope>PHOSPHORYLATION [LARGE SCALE ANALYSIS] AT SER-345</scope>
    <scope>IDENTIFICATION BY MASS SPECTROMETRY [LARGE SCALE ANALYSIS]</scope>
    <source>
        <tissue>Leukemic T-cell</tissue>
    </source>
</reference>
<reference key="5">
    <citation type="journal article" date="2011" name="BMC Syst. Biol.">
        <title>Initial characterization of the human central proteome.</title>
        <authorList>
            <person name="Burkard T.R."/>
            <person name="Planyavsky M."/>
            <person name="Kaupe I."/>
            <person name="Breitwieser F.P."/>
            <person name="Buerckstuemmer T."/>
            <person name="Bennett K.L."/>
            <person name="Superti-Furga G."/>
            <person name="Colinge J."/>
        </authorList>
    </citation>
    <scope>IDENTIFICATION BY MASS SPECTROMETRY [LARGE SCALE ANALYSIS]</scope>
</reference>
<reference key="6">
    <citation type="journal article" date="2012" name="Proc. Natl. Acad. Sci. U.S.A.">
        <title>N-terminal acetylome analyses and functional insights of the N-terminal acetyltransferase NatB.</title>
        <authorList>
            <person name="Van Damme P."/>
            <person name="Lasa M."/>
            <person name="Polevoda B."/>
            <person name="Gazquez C."/>
            <person name="Elosegui-Artola A."/>
            <person name="Kim D.S."/>
            <person name="De Juan-Pardo E."/>
            <person name="Demeyer K."/>
            <person name="Hole K."/>
            <person name="Larrea E."/>
            <person name="Timmerman E."/>
            <person name="Prieto J."/>
            <person name="Arnesen T."/>
            <person name="Sherman F."/>
            <person name="Gevaert K."/>
            <person name="Aldabe R."/>
        </authorList>
    </citation>
    <scope>ACETYLATION [LARGE SCALE ANALYSIS] AT MET-1</scope>
    <scope>IDENTIFICATION BY MASS SPECTROMETRY [LARGE SCALE ANALYSIS]</scope>
</reference>
<reference key="7">
    <citation type="journal article" date="2014" name="J. Proteomics">
        <title>An enzyme assisted RP-RPLC approach for in-depth analysis of human liver phosphoproteome.</title>
        <authorList>
            <person name="Bian Y."/>
            <person name="Song C."/>
            <person name="Cheng K."/>
            <person name="Dong M."/>
            <person name="Wang F."/>
            <person name="Huang J."/>
            <person name="Sun D."/>
            <person name="Wang L."/>
            <person name="Ye M."/>
            <person name="Zou H."/>
        </authorList>
    </citation>
    <scope>PHOSPHORYLATION [LARGE SCALE ANALYSIS] AT SER-464</scope>
    <scope>IDENTIFICATION BY MASS SPECTROMETRY [LARGE SCALE ANALYSIS]</scope>
    <source>
        <tissue>Liver</tissue>
    </source>
</reference>
<reference key="8">
    <citation type="journal article" date="2017" name="Nat. Struct. Mol. Biol.">
        <title>Site-specific mapping of the human SUMO proteome reveals co-modification with phosphorylation.</title>
        <authorList>
            <person name="Hendriks I.A."/>
            <person name="Lyon D."/>
            <person name="Young C."/>
            <person name="Jensen L.J."/>
            <person name="Vertegaal A.C."/>
            <person name="Nielsen M.L."/>
        </authorList>
    </citation>
    <scope>SUMOYLATION [LARGE SCALE ANALYSIS] AT LYS-353 AND LYS-358</scope>
    <scope>IDENTIFICATION BY MASS SPECTROMETRY [LARGE SCALE ANALYSIS]</scope>
</reference>
<reference key="9">
    <citation type="journal article" date="2021" name="Science">
        <title>QRICH1 dictates the outcome of ER stress through transcriptional control of proteostasis.</title>
        <authorList>
            <person name="You K."/>
            <person name="Wang L."/>
            <person name="Chou C.H."/>
            <person name="Liu K."/>
            <person name="Nakata T."/>
            <person name="Jaiswal A."/>
            <person name="Yao J."/>
            <person name="Lefkovith A."/>
            <person name="Omar A."/>
            <person name="Perrigoue J.G."/>
            <person name="Towne J.E."/>
            <person name="Regev A."/>
            <person name="Graham D.B."/>
            <person name="Xavier R.J."/>
        </authorList>
    </citation>
    <scope>FUNCTION</scope>
    <scope>SUBCELLULAR LOCATION</scope>
    <scope>INDUCTION BY ER STRESS</scope>
    <scope>DOMAIN</scope>
</reference>
<reference key="10">
    <citation type="journal article" date="2018" name="Clin. Genet.">
        <title>Phenotypic spectrum associated with de novo mutations in QRICH1 gene.</title>
        <authorList>
            <person name="Ververi A."/>
            <person name="Splitt M."/>
            <person name="Dean J.C.S."/>
            <person name="Brady A.F."/>
        </authorList>
    </citation>
    <scope>INVOLVEMENT IN VERBRAS</scope>
    <scope>VARIANT VERBRAS 652-ARG--HIS-776 DEL</scope>
</reference>
<reference key="11">
    <citation type="journal article" date="2019" name="Clin. Genet.">
        <title>QRICH1 mutations cause a chondrodysplasia with developmental delay.</title>
        <authorList>
            <person name="Lui J.C."/>
            <person name="Jee Y.H."/>
            <person name="Lee A."/>
            <person name="Yue S."/>
            <person name="Wagner J."/>
            <person name="Donnelly D.E."/>
            <person name="Vogt K.S."/>
            <person name="Baron J."/>
        </authorList>
    </citation>
    <scope>FUNCTION</scope>
    <scope>SUBCELLULAR LOCATION</scope>
    <scope>INVOLVEMENT IN VERBRAS</scope>
    <scope>VARIANTS VERBRAS 511-ARG--HIS-776 DEL AND 536-ARG--HIS-776 DEL</scope>
    <scope>CHARACTERIZATION OF VARIANT VERBRAS 536-ARG--HIS-776 DEL</scope>
</reference>
<reference key="12">
    <citation type="journal article" date="2021" name="Clin. Genet.">
        <title>QRICH1 variants in Ververi-Brady syndrome-delineation of the genotypic and phenotypic spectrum.</title>
        <authorList>
            <person name="Foehrenbach M."/>
            <person name="Jamra R.A."/>
            <person name="Borkhardt A."/>
            <person name="Brozou T."/>
            <person name="Muschke P."/>
            <person name="Popp B."/>
            <person name="Rey L.K."/>
            <person name="Schaper J."/>
            <person name="Surowy H."/>
            <person name="Zenker M."/>
            <person name="Zweier C."/>
            <person name="Wieczorek D."/>
            <person name="Redler S."/>
        </authorList>
    </citation>
    <scope>INVOLVEMENT IN VERBRAS</scope>
    <scope>VARIANTS VERBRAS 652-ARG--HIS-776 DEL AND ASN-736</scope>
</reference>
<feature type="chain" id="PRO_0000269853" description="Transcriptional regulator QRICH1">
    <location>
        <begin position="1"/>
        <end position="776"/>
    </location>
</feature>
<feature type="domain" description="CARD" evidence="1">
    <location>
        <begin position="6"/>
        <end position="48"/>
    </location>
</feature>
<feature type="region of interest" description="Disordered" evidence="2">
    <location>
        <begin position="139"/>
        <end position="164"/>
    </location>
</feature>
<feature type="region of interest" description="Disordered" evidence="2">
    <location>
        <begin position="218"/>
        <end position="240"/>
    </location>
</feature>
<feature type="region of interest" description="Disordered" evidence="2">
    <location>
        <begin position="419"/>
        <end position="441"/>
    </location>
</feature>
<feature type="compositionally biased region" description="Low complexity" evidence="2">
    <location>
        <begin position="419"/>
        <end position="429"/>
    </location>
</feature>
<feature type="modified residue" description="N-acetylmethionine" evidence="11">
    <location>
        <position position="1"/>
    </location>
</feature>
<feature type="modified residue" description="Phosphoserine" evidence="10">
    <location>
        <position position="345"/>
    </location>
</feature>
<feature type="modified residue" description="Phosphoserine" evidence="12">
    <location>
        <position position="464"/>
    </location>
</feature>
<feature type="cross-link" description="Glycyl lysine isopeptide (Lys-Gly) (interchain with G-Cter in SUMO2)" evidence="13">
    <location>
        <position position="353"/>
    </location>
</feature>
<feature type="cross-link" description="Glycyl lysine isopeptide (Lys-Gly) (interchain with G-Cter in SUMO2)" evidence="13">
    <location>
        <position position="358"/>
    </location>
</feature>
<feature type="sequence variant" id="VAR_084455" description="In VERBRAS; uncertain significance." evidence="4">
    <location>
        <begin position="511"/>
        <end position="776"/>
    </location>
</feature>
<feature type="sequence variant" id="VAR_084456" description="In VERBRAS; uncertain significance; decreased QRICH1 protein expression; decreased growth plate chondrocyte hypertrophic differentiation." evidence="4">
    <location>
        <begin position="536"/>
        <end position="776"/>
    </location>
</feature>
<feature type="sequence variant" id="VAR_080962" description="In VERBRAS; uncertain significance." evidence="3 5">
    <location>
        <begin position="652"/>
        <end position="776"/>
    </location>
</feature>
<feature type="sequence variant" id="VAR_084457" description="In VERBRAS; uncertain significance." evidence="5">
    <original>S</original>
    <variation>N</variation>
    <location>
        <position position="736"/>
    </location>
</feature>
<feature type="sequence conflict" description="In Ref. 1; BAB85047." evidence="8" ref="1">
    <original>D</original>
    <variation>E</variation>
    <location>
        <position position="251"/>
    </location>
</feature>
<proteinExistence type="evidence at protein level"/>
<sequence>MNNSLENTISFEEYIRVKARSVPQHRMKEFLDSLASKGPEALQEFQQTATTTMVYQQGGNCIYTDSTEVAGSLLELACPVTTSVQPQTQQEQQIQVQQPQQVQVQVQVQQSPQQVSAQLSPQLTVHQPTEQPIQVQVQIQGQAPQSAAPSIQTPSLQSPSPSQLQAAQIQVQHVQAAQQIQAAEIPEEHIPHQQIQAQLVAGQSLAGGQQIQIQTVGALSPPPSQQGSPREGERRVGTASVLQPVKKRKVDMPITVSYAISGQPVATVLAIPQGQQQSYVSLRPDLLTVDSAHLYSATGTITSPTGETWTIPVYSAQPRGDPQQQSITHIAIPQEAYNAVHVSGSPTALAAVKLEDDKEKMVGTTSVVKNSHEEVVQTLANSLFPAQFMNGNIHIPVAVQAVAGTYQNTAQTVHIWDPQQQPQQQTPQEQTPPPQQQQQQLQVTCSAQTVQVAEVEPQSQPQPSPELLLPNSLKPEEGLEVWKNWAQTKNAELEKDAQNRLAPIGRRQLLRFQEDLISSAVAELNYGLCLMTREARNGEGEPYDPDVLYYIFLCIQKYLFENGRVDDIFSDLYYVRFTEWLHEVLKDVQPRVTPLGYVLPSHVTEEMLWECKQLGAHSPSTLLTTLMFFNTKYFLLKTVDQHMKLAFSKVLRQTKKNPSNPKDKSTSIRYLKALGIHQTGQKVTDDMYAEQTENPENPLRCPIKLYDFYLFKCPQSVKGRNDTFYLTPEPVVAPNSPIWYSVQPISREQMGQMLTRILVIREIQEAIAVANASTMH</sequence>
<protein>
    <recommendedName>
        <fullName evidence="8">Transcriptional regulator QRICH1</fullName>
    </recommendedName>
    <alternativeName>
        <fullName>Glutamine-rich protein 1</fullName>
    </alternativeName>
</protein>
<organism>
    <name type="scientific">Homo sapiens</name>
    <name type="common">Human</name>
    <dbReference type="NCBI Taxonomy" id="9606"/>
    <lineage>
        <taxon>Eukaryota</taxon>
        <taxon>Metazoa</taxon>
        <taxon>Chordata</taxon>
        <taxon>Craniata</taxon>
        <taxon>Vertebrata</taxon>
        <taxon>Euteleostomi</taxon>
        <taxon>Mammalia</taxon>
        <taxon>Eutheria</taxon>
        <taxon>Euarchontoglires</taxon>
        <taxon>Primates</taxon>
        <taxon>Haplorrhini</taxon>
        <taxon>Catarrhini</taxon>
        <taxon>Hominidae</taxon>
        <taxon>Homo</taxon>
    </lineage>
</organism>
<keyword id="KW-0007">Acetylation</keyword>
<keyword id="KW-1003">Cell membrane</keyword>
<keyword id="KW-0963">Cytoplasm</keyword>
<keyword id="KW-0225">Disease variant</keyword>
<keyword id="KW-0991">Intellectual disability</keyword>
<keyword id="KW-1017">Isopeptide bond</keyword>
<keyword id="KW-0472">Membrane</keyword>
<keyword id="KW-0539">Nucleus</keyword>
<keyword id="KW-0597">Phosphoprotein</keyword>
<keyword id="KW-1267">Proteomics identification</keyword>
<keyword id="KW-1185">Reference proteome</keyword>
<keyword id="KW-0804">Transcription</keyword>
<keyword id="KW-0805">Transcription regulation</keyword>
<keyword id="KW-0832">Ubl conjugation</keyword>
<keyword id="KW-0834">Unfolded protein response</keyword>
<evidence type="ECO:0000255" key="1">
    <source>
        <dbReference type="PROSITE-ProRule" id="PRU00046"/>
    </source>
</evidence>
<evidence type="ECO:0000256" key="2">
    <source>
        <dbReference type="SAM" id="MobiDB-lite"/>
    </source>
</evidence>
<evidence type="ECO:0000269" key="3">
    <source>
    </source>
</evidence>
<evidence type="ECO:0000269" key="4">
    <source>
    </source>
</evidence>
<evidence type="ECO:0000269" key="5">
    <source>
    </source>
</evidence>
<evidence type="ECO:0000269" key="6">
    <source>
    </source>
</evidence>
<evidence type="ECO:0000303" key="7">
    <source>
    </source>
</evidence>
<evidence type="ECO:0000305" key="8"/>
<evidence type="ECO:0000312" key="9">
    <source>
        <dbReference type="HGNC" id="HGNC:24713"/>
    </source>
</evidence>
<evidence type="ECO:0007744" key="10">
    <source>
    </source>
</evidence>
<evidence type="ECO:0007744" key="11">
    <source>
    </source>
</evidence>
<evidence type="ECO:0007744" key="12">
    <source>
    </source>
</evidence>
<evidence type="ECO:0007744" key="13">
    <source>
    </source>
</evidence>
<name>QRIC1_HUMAN</name>
<comment type="function">
    <text evidence="4 6">Transcriptional regulator that acts as a mediator of the integrated stress response (ISR) through transcriptional control of protein homeostasis under conditions of ER stress (PubMed:33384352). Controls the outcome of the unfolded protein response (UPR) which is an ER-stress response pathway (PubMed:33384352). ER stress induces QRICH1 translation by a ribosome translation re-initiation mechanism in response to EIF2S1/eIF-2-alpha phosphorylation, and stress-induced QRICH1 regulates a transcriptional program associated with protein translation, protein secretion-mediated proteotoxicity and cell death during the terminal UPR (PubMed:33384352). May cooperate with ATF4 transcription factor signaling to regulate ER homeostasis which is critical for cell viability (PubMed:33384352). Up-regulates CASP3/caspase-3 activity in epithelial cells under ER stress. Central regulator of proteotoxicity associated with ER stress-mediated inflammatory diseases in the intestines and liver (PubMed:33384352). Involved in chondrocyte hypertrophy, a process required for normal longitudinal bone growth (PubMed:30281152).</text>
</comment>
<comment type="interaction">
    <interactant intactId="EBI-2798044">
        <id>Q2TAL8</id>
    </interactant>
    <interactant intactId="EBI-11976299">
        <id>Q5BKX5-3</id>
        <label>ACTMAP</label>
    </interactant>
    <organismsDiffer>false</organismsDiffer>
    <experiments>3</experiments>
</comment>
<comment type="interaction">
    <interactant intactId="EBI-2798044">
        <id>Q2TAL8</id>
    </interactant>
    <interactant intactId="EBI-948603">
        <id>Q03989</id>
        <label>ARID5A</label>
    </interactant>
    <organismsDiffer>false</organismsDiffer>
    <experiments>3</experiments>
</comment>
<comment type="interaction">
    <interactant intactId="EBI-2798044">
        <id>Q2TAL8</id>
    </interactant>
    <interactant intactId="EBI-1012434">
        <id>Q6AI39</id>
        <label>BICRAL</label>
    </interactant>
    <organismsDiffer>false</organismsDiffer>
    <experiments>3</experiments>
</comment>
<comment type="interaction">
    <interactant intactId="EBI-2798044">
        <id>Q2TAL8</id>
    </interactant>
    <interactant intactId="EBI-4314501">
        <id>P40199</id>
        <label>CEACAM6</label>
    </interactant>
    <organismsDiffer>false</organismsDiffer>
    <experiments>3</experiments>
</comment>
<comment type="interaction">
    <interactant intactId="EBI-2798044">
        <id>Q2TAL8</id>
    </interactant>
    <interactant intactId="EBI-12160437">
        <id>A8MTA8-2</id>
        <label>CIMIP2B</label>
    </interactant>
    <organismsDiffer>false</organismsDiffer>
    <experiments>3</experiments>
</comment>
<comment type="interaction">
    <interactant intactId="EBI-2798044">
        <id>Q2TAL8</id>
    </interactant>
    <interactant intactId="EBI-748171">
        <id>O43186</id>
        <label>CRX</label>
    </interactant>
    <organismsDiffer>false</organismsDiffer>
    <experiments>6</experiments>
</comment>
<comment type="interaction">
    <interactant intactId="EBI-2798044">
        <id>Q2TAL8</id>
    </interactant>
    <interactant intactId="EBI-3867333">
        <id>A8MQ03</id>
        <label>CYSRT1</label>
    </interactant>
    <organismsDiffer>false</organismsDiffer>
    <experiments>3</experiments>
</comment>
<comment type="interaction">
    <interactant intactId="EBI-2798044">
        <id>Q2TAL8</id>
    </interactant>
    <interactant intactId="EBI-10239299">
        <id>Q9NQM4</id>
        <label>DNAAF6</label>
    </interactant>
    <organismsDiffer>false</organismsDiffer>
    <experiments>3</experiments>
</comment>
<comment type="interaction">
    <interactant intactId="EBI-2798044">
        <id>Q2TAL8</id>
    </interactant>
    <interactant intactId="EBI-701903">
        <id>Q14192</id>
        <label>FHL2</label>
    </interactant>
    <organismsDiffer>false</organismsDiffer>
    <experiments>5</experiments>
</comment>
<comment type="interaction">
    <interactant intactId="EBI-2798044">
        <id>Q2TAL8</id>
    </interactant>
    <interactant intactId="EBI-741101">
        <id>Q13643</id>
        <label>FHL3</label>
    </interactant>
    <organismsDiffer>false</organismsDiffer>
    <experiments>7</experiments>
</comment>
<comment type="interaction">
    <interactant intactId="EBI-2798044">
        <id>Q2TAL8</id>
    </interactant>
    <interactant intactId="EBI-750641">
        <id>Q5TD97</id>
        <label>FHL5</label>
    </interactant>
    <organismsDiffer>false</organismsDiffer>
    <experiments>3</experiments>
</comment>
<comment type="interaction">
    <interactant intactId="EBI-2798044">
        <id>Q2TAL8</id>
    </interactant>
    <interactant intactId="EBI-10172181">
        <id>Q53SE7</id>
        <label>FLJ13057</label>
    </interactant>
    <organismsDiffer>false</organismsDiffer>
    <experiments>3</experiments>
</comment>
<comment type="interaction">
    <interactant intactId="EBI-2798044">
        <id>Q2TAL8</id>
    </interactant>
    <interactant intactId="EBI-2548508">
        <id>Q96IK5</id>
        <label>GMCL1</label>
    </interactant>
    <organismsDiffer>false</organismsDiffer>
    <experiments>5</experiments>
</comment>
<comment type="interaction">
    <interactant intactId="EBI-2798044">
        <id>Q2TAL8</id>
    </interactant>
    <interactant intactId="EBI-3957665">
        <id>Q96LI6</id>
        <label>HSFY2</label>
    </interactant>
    <organismsDiffer>false</organismsDiffer>
    <experiments>3</experiments>
</comment>
<comment type="interaction">
    <interactant intactId="EBI-2798044">
        <id>Q2TAL8</id>
    </interactant>
    <interactant intactId="EBI-739074">
        <id>Q9UJY1</id>
        <label>HSPB8</label>
    </interactant>
    <organismsDiffer>false</organismsDiffer>
    <experiments>7</experiments>
</comment>
<comment type="interaction">
    <interactant intactId="EBI-2798044">
        <id>Q2TAL8</id>
    </interactant>
    <interactant intactId="EBI-9089060">
        <id>Q7Z7F0-4</id>
        <label>KHDC4</label>
    </interactant>
    <organismsDiffer>false</organismsDiffer>
    <experiments>3</experiments>
</comment>
<comment type="interaction">
    <interactant intactId="EBI-2798044">
        <id>Q2TAL8</id>
    </interactant>
    <interactant intactId="EBI-9478422">
        <id>Q96G42</id>
        <label>KLHDC7B</label>
    </interactant>
    <organismsDiffer>false</organismsDiffer>
    <experiments>3</experiments>
</comment>
<comment type="interaction">
    <interactant intactId="EBI-2798044">
        <id>Q2TAL8</id>
    </interactant>
    <interactant intactId="EBI-9088686">
        <id>Q14847-2</id>
        <label>LASP1</label>
    </interactant>
    <organismsDiffer>false</organismsDiffer>
    <experiments>3</experiments>
</comment>
<comment type="interaction">
    <interactant intactId="EBI-2798044">
        <id>Q2TAL8</id>
    </interactant>
    <interactant intactId="EBI-20141748">
        <id>P52954</id>
        <label>LBX1</label>
    </interactant>
    <organismsDiffer>false</organismsDiffer>
    <experiments>3</experiments>
</comment>
<comment type="interaction">
    <interactant intactId="EBI-2798044">
        <id>Q2TAL8</id>
    </interactant>
    <interactant intactId="EBI-12039345">
        <id>Q9UBR4-2</id>
        <label>LHX3</label>
    </interactant>
    <organismsDiffer>false</organismsDiffer>
    <experiments>3</experiments>
</comment>
<comment type="interaction">
    <interactant intactId="EBI-2798044">
        <id>Q2TAL8</id>
    </interactant>
    <interactant intactId="EBI-2865388">
        <id>Q969G2</id>
        <label>LHX4</label>
    </interactant>
    <organismsDiffer>false</organismsDiffer>
    <experiments>3</experiments>
</comment>
<comment type="interaction">
    <interactant intactId="EBI-2798044">
        <id>Q2TAL8</id>
    </interactant>
    <interactant intactId="EBI-11742507">
        <id>Q8TAP4-4</id>
        <label>LMO3</label>
    </interactant>
    <organismsDiffer>false</organismsDiffer>
    <experiments>3</experiments>
</comment>
<comment type="interaction">
    <interactant intactId="EBI-2798044">
        <id>Q2TAL8</id>
    </interactant>
    <interactant intactId="EBI-2798728">
        <id>P61968</id>
        <label>LMO4</label>
    </interactant>
    <organismsDiffer>false</organismsDiffer>
    <experiments>3</experiments>
</comment>
<comment type="interaction">
    <interactant intactId="EBI-2798044">
        <id>Q2TAL8</id>
    </interactant>
    <interactant intactId="EBI-2864512">
        <id>P50221</id>
        <label>MEOX1</label>
    </interactant>
    <organismsDiffer>false</organismsDiffer>
    <experiments>3</experiments>
</comment>
<comment type="interaction">
    <interactant intactId="EBI-2798044">
        <id>Q2TAL8</id>
    </interactant>
    <interactant intactId="EBI-12813813">
        <id>A7E2Y1-2</id>
        <label>MYH7B</label>
    </interactant>
    <organismsDiffer>false</organismsDiffer>
    <experiments>3</experiments>
</comment>
<comment type="interaction">
    <interactant intactId="EBI-2798044">
        <id>Q2TAL8</id>
    </interactant>
    <interactant intactId="EBI-8476987">
        <id>Q14938</id>
        <label>NFIX</label>
    </interactant>
    <organismsDiffer>false</organismsDiffer>
    <experiments>3</experiments>
</comment>
<comment type="interaction">
    <interactant intactId="EBI-2798044">
        <id>Q2TAL8</id>
    </interactant>
    <interactant intactId="EBI-12024662">
        <id>Q14938-5</id>
        <label>NFIX</label>
    </interactant>
    <organismsDiffer>false</organismsDiffer>
    <experiments>3</experiments>
</comment>
<comment type="interaction">
    <interactant intactId="EBI-2798044">
        <id>Q2TAL8</id>
    </interactant>
    <interactant intactId="EBI-11061759">
        <id>P23511-2</id>
        <label>NFYA</label>
    </interactant>
    <organismsDiffer>false</organismsDiffer>
    <experiments>3</experiments>
</comment>
<comment type="interaction">
    <interactant intactId="EBI-2798044">
        <id>Q2TAL8</id>
    </interactant>
    <interactant intactId="EBI-366978">
        <id>Q9UBE8</id>
        <label>NLK</label>
    </interactant>
    <organismsDiffer>false</organismsDiffer>
    <experiments>3</experiments>
</comment>
<comment type="interaction">
    <interactant intactId="EBI-2798044">
        <id>Q2TAL8</id>
    </interactant>
    <interactant intactId="EBI-747278">
        <id>P26367</id>
        <label>PAX6</label>
    </interactant>
    <organismsDiffer>false</organismsDiffer>
    <experiments>3</experiments>
</comment>
<comment type="interaction">
    <interactant intactId="EBI-2798044">
        <id>Q2TAL8</id>
    </interactant>
    <interactant intactId="EBI-18394323">
        <id>H3BRN8</id>
        <label>PIERCE2</label>
    </interactant>
    <organismsDiffer>false</organismsDiffer>
    <experiments>3</experiments>
</comment>
<comment type="interaction">
    <interactant intactId="EBI-2798044">
        <id>Q2TAL8</id>
    </interactant>
    <interactant intactId="EBI-1389308">
        <id>Q7Z3K3</id>
        <label>POGZ</label>
    </interactant>
    <organismsDiffer>false</organismsDiffer>
    <experiments>7</experiments>
</comment>
<comment type="interaction">
    <interactant intactId="EBI-2798044">
        <id>Q2TAL8</id>
    </interactant>
    <interactant intactId="EBI-12029004">
        <id>P78424</id>
        <label>POU6F2</label>
    </interactant>
    <organismsDiffer>false</organismsDiffer>
    <experiments>3</experiments>
</comment>
<comment type="interaction">
    <interactant intactId="EBI-2798044">
        <id>Q2TAL8</id>
    </interactant>
    <interactant intactId="EBI-2805516">
        <id>P31321</id>
        <label>PRKAR1B</label>
    </interactant>
    <organismsDiffer>false</organismsDiffer>
    <experiments>3</experiments>
</comment>
<comment type="interaction">
    <interactant intactId="EBI-2798044">
        <id>Q2TAL8</id>
    </interactant>
    <interactant intactId="EBI-1053259">
        <id>Q9UHX1</id>
        <label>PUF60</label>
    </interactant>
    <organismsDiffer>false</organismsDiffer>
    <experiments>3</experiments>
</comment>
<comment type="interaction">
    <interactant intactId="EBI-2798044">
        <id>Q2TAL8</id>
    </interactant>
    <interactant intactId="EBI-740272">
        <id>Q96I25</id>
        <label>RBM17</label>
    </interactant>
    <organismsDiffer>false</organismsDiffer>
    <experiments>4</experiments>
</comment>
<comment type="interaction">
    <interactant intactId="EBI-2798044">
        <id>Q2TAL8</id>
    </interactant>
    <interactant intactId="EBI-10216195">
        <id>P59797</id>
        <label>SELENOV</label>
    </interactant>
    <organismsDiffer>false</organismsDiffer>
    <experiments>3</experiments>
</comment>
<comment type="interaction">
    <interactant intactId="EBI-2798044">
        <id>Q2TAL8</id>
    </interactant>
    <interactant intactId="EBI-714091">
        <id>P49903</id>
        <label>SEPHS1</label>
    </interactant>
    <organismsDiffer>false</organismsDiffer>
    <experiments>9</experiments>
</comment>
<comment type="interaction">
    <interactant intactId="EBI-2798044">
        <id>Q2TAL8</id>
    </interactant>
    <interactant intactId="EBI-747107">
        <id>Q8IUQ4</id>
        <label>SIAH1</label>
    </interactant>
    <organismsDiffer>false</organismsDiffer>
    <experiments>3</experiments>
</comment>
<comment type="interaction">
    <interactant intactId="EBI-2798044">
        <id>Q2TAL8</id>
    </interactant>
    <interactant intactId="EBI-12061577">
        <id>Q8IYB5-2</id>
        <label>SMAP1</label>
    </interactant>
    <organismsDiffer>false</organismsDiffer>
    <experiments>3</experiments>
</comment>
<comment type="interaction">
    <interactant intactId="EBI-2798044">
        <id>Q2TAL8</id>
    </interactant>
    <interactant intactId="EBI-9088579">
        <id>Q02086-2</id>
        <label>SP2</label>
    </interactant>
    <organismsDiffer>false</organismsDiffer>
    <experiments>3</experiments>
</comment>
<comment type="interaction">
    <interactant intactId="EBI-2798044">
        <id>Q2TAL8</id>
    </interactant>
    <interactant intactId="EBI-17858294">
        <id>Q8NEQ6</id>
        <label>SRARP</label>
    </interactant>
    <organismsDiffer>false</organismsDiffer>
    <experiments>3</experiments>
</comment>
<comment type="interaction">
    <interactant intactId="EBI-2798044">
        <id>Q2TAL8</id>
    </interactant>
    <interactant intactId="EBI-10239812">
        <id>Q96M29</id>
        <label>TEKT5</label>
    </interactant>
    <organismsDiffer>false</organismsDiffer>
    <experiments>3</experiments>
</comment>
<comment type="interaction">
    <interactant intactId="EBI-2798044">
        <id>Q2TAL8</id>
    </interactant>
    <interactant intactId="EBI-948613">
        <id>O94842</id>
        <label>TOX4</label>
    </interactant>
    <organismsDiffer>false</organismsDiffer>
    <experiments>5</experiments>
</comment>
<comment type="interaction">
    <interactant intactId="EBI-2798044">
        <id>Q2TAL8</id>
    </interactant>
    <interactant intactId="EBI-359224">
        <id>Q13077</id>
        <label>TRAF1</label>
    </interactant>
    <organismsDiffer>false</organismsDiffer>
    <experiments>6</experiments>
</comment>
<comment type="interaction">
    <interactant intactId="EBI-2798044">
        <id>Q2TAL8</id>
    </interactant>
    <interactant intactId="EBI-355744">
        <id>Q12933</id>
        <label>TRAF2</label>
    </interactant>
    <organismsDiffer>false</organismsDiffer>
    <experiments>3</experiments>
</comment>
<comment type="interaction">
    <interactant intactId="EBI-2798044">
        <id>Q2TAL8</id>
    </interactant>
    <interactant intactId="EBI-11975223">
        <id>Q70EL1-9</id>
        <label>USP54</label>
    </interactant>
    <organismsDiffer>false</organismsDiffer>
    <experiments>3</experiments>
</comment>
<comment type="interaction">
    <interactant intactId="EBI-2798044">
        <id>Q2TAL8</id>
    </interactant>
    <interactant intactId="EBI-444225">
        <id>Q15942</id>
        <label>ZYX</label>
    </interactant>
    <organismsDiffer>false</organismsDiffer>
    <experiments>3</experiments>
</comment>
<comment type="subcellular location">
    <subcellularLocation>
        <location evidence="4 6">Nucleus</location>
    </subcellularLocation>
    <subcellularLocation>
        <location evidence="4">Cytoplasm</location>
    </subcellularLocation>
    <subcellularLocation>
        <location evidence="4">Cell membrane</location>
    </subcellularLocation>
</comment>
<comment type="induction">
    <text evidence="6">Regulated at the translational level via an alternative ribosome re-initiation mechanism in response to various stress such as endoplasmic reticulum stress or oxidative stress (PubMed:33384352). In the absence of stress, ribosomes re-initiate translation at an inhibitory upstream open reading frames (uORFs) of the QRICH1 transcript, which preclude QRICH1 translation. In response to stress and subsequent EIF2S1/eIF-2-alpha phosphorylation, ribosomes bypass the inhibitory uORFs and re-initiate translation at the QRICH1 coding sequence (PubMed:33384352). Positive autoregulation at the transcriptional level (PubMed:33384352).</text>
</comment>
<comment type="domain">
    <text evidence="7">The CARD domain may be involved in the regulation of caspase activity in the context of programmed cell death.</text>
</comment>
<comment type="disease" evidence="3 4 5">
    <disease id="DI-05250">
        <name>Ververi-Brady syndrome</name>
        <acronym>VERBRAS</acronym>
        <description>An autosomal dominant disorder characterized by mild developmental delay and intellectual disability, speech delay, learning difficulties, autistic features, and mild facial dysmorphism.</description>
        <dbReference type="MIM" id="617982"/>
    </disease>
    <text>The disease may be caused by variants affecting the gene represented in this entry.</text>
</comment>